<sequence>MASDINALKYKKVLLKVSGEALMGNKQFGHEYEVIKKIAEDIKEVIDLGLEVAIVVGGGNIYRGINAALVGMDRASADYIGMLATVMNALTLQNVMESLGIYTRVLSAIPMMSVCEPYIRRKAKRHMEKKRVVIFAGGTGNPFCTTDSAAVLRAIEMNCDILLKATQVDGVYDSDPKKNPNAKKYFTISYKDVINNHLQVMDTAAIAVARENKLPIRVFSIKEHGNFARVIQDKGQYTTIGE</sequence>
<organism>
    <name type="scientific">Rickettsia prowazekii (strain Madrid E)</name>
    <dbReference type="NCBI Taxonomy" id="272947"/>
    <lineage>
        <taxon>Bacteria</taxon>
        <taxon>Pseudomonadati</taxon>
        <taxon>Pseudomonadota</taxon>
        <taxon>Alphaproteobacteria</taxon>
        <taxon>Rickettsiales</taxon>
        <taxon>Rickettsiaceae</taxon>
        <taxon>Rickettsieae</taxon>
        <taxon>Rickettsia</taxon>
        <taxon>typhus group</taxon>
    </lineage>
</organism>
<proteinExistence type="inferred from homology"/>
<gene>
    <name evidence="1" type="primary">pyrH</name>
    <name type="ordered locus">RP155</name>
</gene>
<dbReference type="EC" id="2.7.4.22" evidence="1"/>
<dbReference type="EMBL" id="AJ235270">
    <property type="protein sequence ID" value="CAA14623.1"/>
    <property type="molecule type" value="Genomic_DNA"/>
</dbReference>
<dbReference type="PIR" id="H71725">
    <property type="entry name" value="H71725"/>
</dbReference>
<dbReference type="RefSeq" id="NP_220546.1">
    <property type="nucleotide sequence ID" value="NC_000963.1"/>
</dbReference>
<dbReference type="RefSeq" id="WP_004598633.1">
    <property type="nucleotide sequence ID" value="NC_000963.1"/>
</dbReference>
<dbReference type="SMR" id="Q9ZE07"/>
<dbReference type="STRING" id="272947.gene:17555238"/>
<dbReference type="EnsemblBacteria" id="CAA14623">
    <property type="protein sequence ID" value="CAA14623"/>
    <property type="gene ID" value="CAA14623"/>
</dbReference>
<dbReference type="GeneID" id="57569284"/>
<dbReference type="KEGG" id="rpr:RP155"/>
<dbReference type="PATRIC" id="fig|272947.5.peg.160"/>
<dbReference type="eggNOG" id="COG0528">
    <property type="taxonomic scope" value="Bacteria"/>
</dbReference>
<dbReference type="HOGENOM" id="CLU_033861_0_0_5"/>
<dbReference type="OrthoDB" id="9807458at2"/>
<dbReference type="UniPathway" id="UPA00159">
    <property type="reaction ID" value="UER00275"/>
</dbReference>
<dbReference type="Proteomes" id="UP000002480">
    <property type="component" value="Chromosome"/>
</dbReference>
<dbReference type="GO" id="GO:0005737">
    <property type="term" value="C:cytoplasm"/>
    <property type="evidence" value="ECO:0007669"/>
    <property type="project" value="UniProtKB-SubCell"/>
</dbReference>
<dbReference type="GO" id="GO:0005524">
    <property type="term" value="F:ATP binding"/>
    <property type="evidence" value="ECO:0007669"/>
    <property type="project" value="UniProtKB-KW"/>
</dbReference>
<dbReference type="GO" id="GO:0033862">
    <property type="term" value="F:UMP kinase activity"/>
    <property type="evidence" value="ECO:0007669"/>
    <property type="project" value="UniProtKB-EC"/>
</dbReference>
<dbReference type="GO" id="GO:0044210">
    <property type="term" value="P:'de novo' CTP biosynthetic process"/>
    <property type="evidence" value="ECO:0007669"/>
    <property type="project" value="UniProtKB-UniRule"/>
</dbReference>
<dbReference type="GO" id="GO:0006225">
    <property type="term" value="P:UDP biosynthetic process"/>
    <property type="evidence" value="ECO:0007669"/>
    <property type="project" value="TreeGrafter"/>
</dbReference>
<dbReference type="CDD" id="cd04254">
    <property type="entry name" value="AAK_UMPK-PyrH-Ec"/>
    <property type="match status" value="1"/>
</dbReference>
<dbReference type="FunFam" id="3.40.1160.10:FF:000001">
    <property type="entry name" value="Uridylate kinase"/>
    <property type="match status" value="1"/>
</dbReference>
<dbReference type="Gene3D" id="3.40.1160.10">
    <property type="entry name" value="Acetylglutamate kinase-like"/>
    <property type="match status" value="1"/>
</dbReference>
<dbReference type="HAMAP" id="MF_01220_B">
    <property type="entry name" value="PyrH_B"/>
    <property type="match status" value="1"/>
</dbReference>
<dbReference type="InterPro" id="IPR036393">
    <property type="entry name" value="AceGlu_kinase-like_sf"/>
</dbReference>
<dbReference type="InterPro" id="IPR001048">
    <property type="entry name" value="Asp/Glu/Uridylate_kinase"/>
</dbReference>
<dbReference type="InterPro" id="IPR011817">
    <property type="entry name" value="Uridylate_kinase"/>
</dbReference>
<dbReference type="InterPro" id="IPR015963">
    <property type="entry name" value="Uridylate_kinase_bac"/>
</dbReference>
<dbReference type="NCBIfam" id="TIGR02075">
    <property type="entry name" value="pyrH_bact"/>
    <property type="match status" value="1"/>
</dbReference>
<dbReference type="PANTHER" id="PTHR42833">
    <property type="entry name" value="URIDYLATE KINASE"/>
    <property type="match status" value="1"/>
</dbReference>
<dbReference type="PANTHER" id="PTHR42833:SF4">
    <property type="entry name" value="URIDYLATE KINASE PUMPKIN, CHLOROPLASTIC"/>
    <property type="match status" value="1"/>
</dbReference>
<dbReference type="Pfam" id="PF00696">
    <property type="entry name" value="AA_kinase"/>
    <property type="match status" value="1"/>
</dbReference>
<dbReference type="PIRSF" id="PIRSF005650">
    <property type="entry name" value="Uridylate_kin"/>
    <property type="match status" value="1"/>
</dbReference>
<dbReference type="SUPFAM" id="SSF53633">
    <property type="entry name" value="Carbamate kinase-like"/>
    <property type="match status" value="1"/>
</dbReference>
<evidence type="ECO:0000255" key="1">
    <source>
        <dbReference type="HAMAP-Rule" id="MF_01220"/>
    </source>
</evidence>
<reference key="1">
    <citation type="journal article" date="1998" name="Nature">
        <title>The genome sequence of Rickettsia prowazekii and the origin of mitochondria.</title>
        <authorList>
            <person name="Andersson S.G.E."/>
            <person name="Zomorodipour A."/>
            <person name="Andersson J.O."/>
            <person name="Sicheritz-Ponten T."/>
            <person name="Alsmark U.C.M."/>
            <person name="Podowski R.M."/>
            <person name="Naeslund A.K."/>
            <person name="Eriksson A.-S."/>
            <person name="Winkler H.H."/>
            <person name="Kurland C.G."/>
        </authorList>
    </citation>
    <scope>NUCLEOTIDE SEQUENCE [LARGE SCALE GENOMIC DNA]</scope>
    <source>
        <strain>Madrid E</strain>
    </source>
</reference>
<feature type="chain" id="PRO_0000143877" description="Uridylate kinase">
    <location>
        <begin position="1"/>
        <end position="242"/>
    </location>
</feature>
<feature type="binding site" evidence="1">
    <location>
        <begin position="16"/>
        <end position="19"/>
    </location>
    <ligand>
        <name>ATP</name>
        <dbReference type="ChEBI" id="CHEBI:30616"/>
    </ligand>
</feature>
<feature type="binding site" evidence="1">
    <location>
        <position position="58"/>
    </location>
    <ligand>
        <name>UMP</name>
        <dbReference type="ChEBI" id="CHEBI:57865"/>
    </ligand>
</feature>
<feature type="binding site" evidence="1">
    <location>
        <position position="59"/>
    </location>
    <ligand>
        <name>ATP</name>
        <dbReference type="ChEBI" id="CHEBI:30616"/>
    </ligand>
</feature>
<feature type="binding site" evidence="1">
    <location>
        <position position="63"/>
    </location>
    <ligand>
        <name>ATP</name>
        <dbReference type="ChEBI" id="CHEBI:30616"/>
    </ligand>
</feature>
<feature type="binding site" evidence="1">
    <location>
        <position position="78"/>
    </location>
    <ligand>
        <name>UMP</name>
        <dbReference type="ChEBI" id="CHEBI:57865"/>
    </ligand>
</feature>
<feature type="binding site" evidence="1">
    <location>
        <begin position="139"/>
        <end position="146"/>
    </location>
    <ligand>
        <name>UMP</name>
        <dbReference type="ChEBI" id="CHEBI:57865"/>
    </ligand>
</feature>
<feature type="binding site" evidence="1">
    <location>
        <position position="166"/>
    </location>
    <ligand>
        <name>ATP</name>
        <dbReference type="ChEBI" id="CHEBI:30616"/>
    </ligand>
</feature>
<feature type="binding site" evidence="1">
    <location>
        <position position="167"/>
    </location>
    <ligand>
        <name>ATP</name>
        <dbReference type="ChEBI" id="CHEBI:30616"/>
    </ligand>
</feature>
<feature type="binding site" evidence="1">
    <location>
        <position position="172"/>
    </location>
    <ligand>
        <name>ATP</name>
        <dbReference type="ChEBI" id="CHEBI:30616"/>
    </ligand>
</feature>
<feature type="binding site" evidence="1">
    <location>
        <position position="175"/>
    </location>
    <ligand>
        <name>ATP</name>
        <dbReference type="ChEBI" id="CHEBI:30616"/>
    </ligand>
</feature>
<protein>
    <recommendedName>
        <fullName evidence="1">Uridylate kinase</fullName>
        <shortName evidence="1">UK</shortName>
        <ecNumber evidence="1">2.7.4.22</ecNumber>
    </recommendedName>
    <alternativeName>
        <fullName evidence="1">Uridine monophosphate kinase</fullName>
        <shortName evidence="1">UMP kinase</shortName>
        <shortName evidence="1">UMPK</shortName>
    </alternativeName>
</protein>
<keyword id="KW-0067">ATP-binding</keyword>
<keyword id="KW-0963">Cytoplasm</keyword>
<keyword id="KW-0418">Kinase</keyword>
<keyword id="KW-0547">Nucleotide-binding</keyword>
<keyword id="KW-0665">Pyrimidine biosynthesis</keyword>
<keyword id="KW-1185">Reference proteome</keyword>
<keyword id="KW-0808">Transferase</keyword>
<comment type="function">
    <text evidence="1">Catalyzes the reversible phosphorylation of UMP to UDP.</text>
</comment>
<comment type="catalytic activity">
    <reaction evidence="1">
        <text>UMP + ATP = UDP + ADP</text>
        <dbReference type="Rhea" id="RHEA:24400"/>
        <dbReference type="ChEBI" id="CHEBI:30616"/>
        <dbReference type="ChEBI" id="CHEBI:57865"/>
        <dbReference type="ChEBI" id="CHEBI:58223"/>
        <dbReference type="ChEBI" id="CHEBI:456216"/>
        <dbReference type="EC" id="2.7.4.22"/>
    </reaction>
</comment>
<comment type="activity regulation">
    <text evidence="1">Inhibited by UTP.</text>
</comment>
<comment type="pathway">
    <text evidence="1">Pyrimidine metabolism; CTP biosynthesis via de novo pathway; UDP from UMP (UMPK route): step 1/1.</text>
</comment>
<comment type="subunit">
    <text evidence="1">Homohexamer.</text>
</comment>
<comment type="subcellular location">
    <subcellularLocation>
        <location evidence="1">Cytoplasm</location>
    </subcellularLocation>
</comment>
<comment type="similarity">
    <text evidence="1">Belongs to the UMP kinase family.</text>
</comment>
<name>PYRH_RICPR</name>
<accession>Q9ZE07</accession>